<protein>
    <recommendedName>
        <fullName>Suppressor of kinetochore protein 1</fullName>
    </recommendedName>
    <alternativeName>
        <fullName>P19/Skp1 homolog</fullName>
    </alternativeName>
</protein>
<name>SKP1_SCHPO</name>
<dbReference type="EMBL" id="AB027472">
    <property type="protein sequence ID" value="BAA77790.1"/>
    <property type="molecule type" value="Genomic_DNA"/>
</dbReference>
<dbReference type="EMBL" id="AB067633">
    <property type="protein sequence ID" value="BAB62325.1"/>
    <property type="molecule type" value="Genomic_DNA"/>
</dbReference>
<dbReference type="EMBL" id="AF071066">
    <property type="protein sequence ID" value="AAD37024.1"/>
    <property type="molecule type" value="Genomic_DNA"/>
</dbReference>
<dbReference type="EMBL" id="CU329671">
    <property type="protein sequence ID" value="CAB52607.1"/>
    <property type="molecule type" value="Genomic_DNA"/>
</dbReference>
<dbReference type="PIR" id="T45459">
    <property type="entry name" value="T45459"/>
</dbReference>
<dbReference type="RefSeq" id="NP_595455.1">
    <property type="nucleotide sequence ID" value="NM_001021365.2"/>
</dbReference>
<dbReference type="SMR" id="Q9Y709"/>
<dbReference type="BioGRID" id="277433">
    <property type="interactions" value="54"/>
</dbReference>
<dbReference type="ComplexPortal" id="CPX-25781">
    <property type="entry name" value="RAVE complex"/>
</dbReference>
<dbReference type="FunCoup" id="Q9Y709">
    <property type="interactions" value="585"/>
</dbReference>
<dbReference type="IntAct" id="Q9Y709">
    <property type="interactions" value="37"/>
</dbReference>
<dbReference type="MINT" id="Q9Y709"/>
<dbReference type="STRING" id="284812.Q9Y709"/>
<dbReference type="iPTMnet" id="Q9Y709"/>
<dbReference type="PaxDb" id="4896-SPBC409.05.1"/>
<dbReference type="EnsemblFungi" id="SPBC409.05.1">
    <property type="protein sequence ID" value="SPBC409.05.1:pep"/>
    <property type="gene ID" value="SPBC409.05"/>
</dbReference>
<dbReference type="GeneID" id="2540917"/>
<dbReference type="KEGG" id="spo:2540917"/>
<dbReference type="PomBase" id="SPBC409.05">
    <property type="gene designation" value="skp1"/>
</dbReference>
<dbReference type="VEuPathDB" id="FungiDB:SPBC409.05"/>
<dbReference type="eggNOG" id="KOG1724">
    <property type="taxonomic scope" value="Eukaryota"/>
</dbReference>
<dbReference type="HOGENOM" id="CLU_059252_4_0_1"/>
<dbReference type="InParanoid" id="Q9Y709"/>
<dbReference type="OMA" id="DKYTASM"/>
<dbReference type="PhylomeDB" id="Q9Y709"/>
<dbReference type="Reactome" id="R-SPO-68949">
    <property type="pathway name" value="Orc1 removal from chromatin"/>
</dbReference>
<dbReference type="Reactome" id="R-SPO-8854050">
    <property type="pathway name" value="FBXL7 down-regulates AURKA during mitotic entry and in early mitosis"/>
</dbReference>
<dbReference type="Reactome" id="R-SPO-8951664">
    <property type="pathway name" value="Neddylation"/>
</dbReference>
<dbReference type="Reactome" id="R-SPO-983168">
    <property type="pathway name" value="Antigen processing: Ubiquitination &amp; Proteasome degradation"/>
</dbReference>
<dbReference type="PRO" id="PR:Q9Y709"/>
<dbReference type="Proteomes" id="UP000002485">
    <property type="component" value="Chromosome II"/>
</dbReference>
<dbReference type="GO" id="GO:0005737">
    <property type="term" value="C:cytoplasm"/>
    <property type="evidence" value="ECO:0000318"/>
    <property type="project" value="GO_Central"/>
</dbReference>
<dbReference type="GO" id="GO:0005829">
    <property type="term" value="C:cytosol"/>
    <property type="evidence" value="ECO:0007005"/>
    <property type="project" value="PomBase"/>
</dbReference>
<dbReference type="GO" id="GO:0043224">
    <property type="term" value="C:nuclear SCF ubiquitin ligase complex"/>
    <property type="evidence" value="ECO:0000314"/>
    <property type="project" value="PomBase"/>
</dbReference>
<dbReference type="GO" id="GO:0005634">
    <property type="term" value="C:nucleus"/>
    <property type="evidence" value="ECO:0007005"/>
    <property type="project" value="PomBase"/>
</dbReference>
<dbReference type="GO" id="GO:0043291">
    <property type="term" value="C:RAVE complex"/>
    <property type="evidence" value="ECO:0000353"/>
    <property type="project" value="PomBase"/>
</dbReference>
<dbReference type="GO" id="GO:0017117">
    <property type="term" value="C:single-stranded DNA-dependent ATP-dependent DNA helicase complex"/>
    <property type="evidence" value="ECO:0000314"/>
    <property type="project" value="PomBase"/>
</dbReference>
<dbReference type="GO" id="GO:0097602">
    <property type="term" value="F:cullin family protein binding"/>
    <property type="evidence" value="ECO:0000318"/>
    <property type="project" value="GO_Central"/>
</dbReference>
<dbReference type="GO" id="GO:0051301">
    <property type="term" value="P:cell division"/>
    <property type="evidence" value="ECO:0007669"/>
    <property type="project" value="UniProtKB-KW"/>
</dbReference>
<dbReference type="GO" id="GO:0006974">
    <property type="term" value="P:DNA damage response"/>
    <property type="evidence" value="ECO:0007669"/>
    <property type="project" value="UniProtKB-KW"/>
</dbReference>
<dbReference type="GO" id="GO:0000278">
    <property type="term" value="P:mitotic cell cycle"/>
    <property type="evidence" value="ECO:0000318"/>
    <property type="project" value="GO_Central"/>
</dbReference>
<dbReference type="GO" id="GO:0101026">
    <property type="term" value="P:mitotic nuclear membrane biogenesis"/>
    <property type="evidence" value="ECO:0000315"/>
    <property type="project" value="PomBase"/>
</dbReference>
<dbReference type="GO" id="GO:0045841">
    <property type="term" value="P:negative regulation of mitotic metaphase/anaphase transition"/>
    <property type="evidence" value="ECO:0000315"/>
    <property type="project" value="UniProtKB"/>
</dbReference>
<dbReference type="GO" id="GO:0006998">
    <property type="term" value="P:nuclear envelope organization"/>
    <property type="evidence" value="ECO:0000315"/>
    <property type="project" value="UniProtKB"/>
</dbReference>
<dbReference type="GO" id="GO:0030163">
    <property type="term" value="P:protein catabolic process"/>
    <property type="evidence" value="ECO:0000315"/>
    <property type="project" value="UniProtKB"/>
</dbReference>
<dbReference type="GO" id="GO:0000018">
    <property type="term" value="P:regulation of DNA recombination"/>
    <property type="evidence" value="ECO:0000314"/>
    <property type="project" value="PomBase"/>
</dbReference>
<dbReference type="GO" id="GO:0000712">
    <property type="term" value="P:resolution of meiotic recombination intermediates"/>
    <property type="evidence" value="ECO:0000315"/>
    <property type="project" value="PomBase"/>
</dbReference>
<dbReference type="GO" id="GO:0031146">
    <property type="term" value="P:SCF-dependent proteasomal ubiquitin-dependent protein catabolic process"/>
    <property type="evidence" value="ECO:0000314"/>
    <property type="project" value="PomBase"/>
</dbReference>
<dbReference type="CDD" id="cd18322">
    <property type="entry name" value="BTB_POZ_SKP1"/>
    <property type="match status" value="1"/>
</dbReference>
<dbReference type="FunFam" id="3.30.710.10:FF:000026">
    <property type="entry name" value="E3 ubiquitin ligase complex SCF subunit"/>
    <property type="match status" value="1"/>
</dbReference>
<dbReference type="Gene3D" id="3.30.710.10">
    <property type="entry name" value="Potassium Channel Kv1.1, Chain A"/>
    <property type="match status" value="1"/>
</dbReference>
<dbReference type="InterPro" id="IPR016897">
    <property type="entry name" value="SKP1"/>
</dbReference>
<dbReference type="InterPro" id="IPR001232">
    <property type="entry name" value="SKP1-like"/>
</dbReference>
<dbReference type="InterPro" id="IPR036296">
    <property type="entry name" value="SKP1-like_dim_sf"/>
</dbReference>
<dbReference type="InterPro" id="IPR011333">
    <property type="entry name" value="SKP1/BTB/POZ_sf"/>
</dbReference>
<dbReference type="InterPro" id="IPR016072">
    <property type="entry name" value="Skp1_comp_dimer"/>
</dbReference>
<dbReference type="InterPro" id="IPR016073">
    <property type="entry name" value="Skp1_comp_POZ"/>
</dbReference>
<dbReference type="PANTHER" id="PTHR11165">
    <property type="entry name" value="SKP1"/>
    <property type="match status" value="1"/>
</dbReference>
<dbReference type="Pfam" id="PF01466">
    <property type="entry name" value="Skp1"/>
    <property type="match status" value="1"/>
</dbReference>
<dbReference type="Pfam" id="PF03931">
    <property type="entry name" value="Skp1_POZ"/>
    <property type="match status" value="1"/>
</dbReference>
<dbReference type="PIRSF" id="PIRSF028729">
    <property type="entry name" value="E3_ubiquit_lig_SCF_Skp"/>
    <property type="match status" value="1"/>
</dbReference>
<dbReference type="SMART" id="SM00512">
    <property type="entry name" value="Skp1"/>
    <property type="match status" value="1"/>
</dbReference>
<dbReference type="SUPFAM" id="SSF54695">
    <property type="entry name" value="POZ domain"/>
    <property type="match status" value="1"/>
</dbReference>
<dbReference type="SUPFAM" id="SSF81382">
    <property type="entry name" value="Skp1 dimerisation domain-like"/>
    <property type="match status" value="1"/>
</dbReference>
<keyword id="KW-0131">Cell cycle</keyword>
<keyword id="KW-0132">Cell division</keyword>
<keyword id="KW-0963">Cytoplasm</keyword>
<keyword id="KW-0227">DNA damage</keyword>
<keyword id="KW-0498">Mitosis</keyword>
<keyword id="KW-0539">Nucleus</keyword>
<keyword id="KW-1185">Reference proteome</keyword>
<keyword id="KW-0833">Ubl conjugation pathway</keyword>
<gene>
    <name evidence="17" type="primary">skp1</name>
    <name evidence="17" type="synonym">psh1</name>
    <name evidence="17" type="synonym">sph1</name>
    <name type="ORF">SPBC409.05</name>
</gene>
<accession>Q9Y709</accession>
<evidence type="ECO:0000250" key="1"/>
<evidence type="ECO:0000255" key="2"/>
<evidence type="ECO:0000269" key="3">
    <source>
    </source>
</evidence>
<evidence type="ECO:0000269" key="4">
    <source>
    </source>
</evidence>
<evidence type="ECO:0000269" key="5">
    <source>
    </source>
</evidence>
<evidence type="ECO:0000269" key="6">
    <source>
    </source>
</evidence>
<evidence type="ECO:0000269" key="7">
    <source>
    </source>
</evidence>
<evidence type="ECO:0000269" key="8">
    <source>
    </source>
</evidence>
<evidence type="ECO:0000269" key="9">
    <source>
    </source>
</evidence>
<evidence type="ECO:0000269" key="10">
    <source>
    </source>
</evidence>
<evidence type="ECO:0000269" key="11">
    <source>
    </source>
</evidence>
<evidence type="ECO:0000269" key="12">
    <source>
    </source>
</evidence>
<evidence type="ECO:0000305" key="13"/>
<evidence type="ECO:0000312" key="14">
    <source>
        <dbReference type="EMBL" id="AAD37024.1"/>
    </source>
</evidence>
<evidence type="ECO:0000312" key="15">
    <source>
        <dbReference type="EMBL" id="BAA77790.1"/>
    </source>
</evidence>
<evidence type="ECO:0000312" key="16">
    <source>
        <dbReference type="EMBL" id="BAB62325.1"/>
    </source>
</evidence>
<evidence type="ECO:0000312" key="17">
    <source>
        <dbReference type="EMBL" id="CAB52607.1"/>
    </source>
</evidence>
<sequence length="161" mass="18772">MSKIKLISSDNEEFVVDQLIAERSMLIKNMLEDVGEINVPIPLPNVSSNVLRKVLEWCEHHKNDLYSGTEEESDIRLKKSTDIDEWDRKFMAVDQEMLFEIVLASNYLDIKPLLDTGCKTVANMIRGKSPEDIRKTFNIPNDFTPEEEEQIRKENEWAEDR</sequence>
<comment type="function">
    <text evidence="3 4 5 6 7">Required for cig2 degradation in the G2 and M phases of the cell cycle. Together with pof6, essential for septum processing and cell separation. Involved in mitotic progression, essential for the execution of anaphase B; required for coordinated structural alterations of mitotic spindles and segregation of nuclear membrane structures at anaphase. Involved in the DNA damage checkpoint pathway and maintenance of genome integrity. Component of the RAVE complex which is required for stable assembly of the vacuolar ATPase complex V-ATPase.</text>
</comment>
<comment type="subunit">
    <text evidence="4 5 6 8 10 11 12">Essential component of the E3 ubiquitin ligase Skp1-Cullin-1-F-box (SCF) complex. Interacts with cul1, fbh1, mcs2, pip1, pof1, pof2, pof3, pof4, pof5, pof6, pof7, pof8, pof9, pof10, pof11, pof12, pof13, pof14, pop1, pop2 and tfb3. Forms a complex with pof6 and sip1. Component of the RAVE complex composed of rav1, rav2 and skp1.</text>
</comment>
<comment type="interaction">
    <interactant intactId="EBI-1172248">
        <id>Q9Y709</id>
    </interactant>
    <interactant intactId="EBI-1154807">
        <id>O13790</id>
        <label>cul1</label>
    </interactant>
    <organismsDiffer>false</organismsDiffer>
    <experiments>2</experiments>
</comment>
<comment type="interaction">
    <interactant intactId="EBI-1172248">
        <id>Q9Y709</id>
    </interactant>
    <interactant intactId="EBI-1168694">
        <id>P36613</id>
        <label>mcs2</label>
    </interactant>
    <organismsDiffer>false</organismsDiffer>
    <experiments>3</experiments>
</comment>
<comment type="interaction">
    <interactant intactId="EBI-1172248">
        <id>Q9Y709</id>
    </interactant>
    <interactant intactId="EBI-1112060">
        <id>O13959</id>
        <label>pip1</label>
    </interactant>
    <organismsDiffer>false</organismsDiffer>
    <experiments>6</experiments>
</comment>
<comment type="interaction">
    <interactant intactId="EBI-1172248">
        <id>Q9Y709</id>
    </interactant>
    <interactant intactId="EBI-1168961">
        <id>O94684</id>
        <label>pmh1</label>
    </interactant>
    <organismsDiffer>false</organismsDiffer>
    <experiments>3</experiments>
</comment>
<comment type="interaction">
    <interactant intactId="EBI-1172248">
        <id>Q9Y709</id>
    </interactant>
    <interactant intactId="EBI-1185435">
        <id>P87053</id>
        <label>pof1</label>
    </interactant>
    <organismsDiffer>false</organismsDiffer>
    <experiments>2</experiments>
</comment>
<comment type="interaction">
    <interactant intactId="EBI-1172248">
        <id>Q9Y709</id>
    </interactant>
    <interactant intactId="EBI-908406">
        <id>Q9P7W4</id>
        <label>pof10</label>
    </interactant>
    <organismsDiffer>false</organismsDiffer>
    <experiments>5</experiments>
</comment>
<comment type="interaction">
    <interactant intactId="EBI-1172248">
        <id>Q9Y709</id>
    </interactant>
    <interactant intactId="EBI-1793014">
        <id>Q10223</id>
        <label>pof14</label>
    </interactant>
    <organismsDiffer>false</organismsDiffer>
    <experiments>5</experiments>
</comment>
<comment type="interaction">
    <interactant intactId="EBI-1172248">
        <id>Q9Y709</id>
    </interactant>
    <interactant intactId="EBI-1153554">
        <id>O74991</id>
        <label>pof3</label>
    </interactant>
    <organismsDiffer>false</organismsDiffer>
    <experiments>3</experiments>
</comment>
<comment type="interaction">
    <interactant intactId="EBI-1172248">
        <id>Q9Y709</id>
    </interactant>
    <interactant intactId="EBI-1185512">
        <id>O14235</id>
        <label>pof5</label>
    </interactant>
    <organismsDiffer>false</organismsDiffer>
    <experiments>2</experiments>
</comment>
<comment type="interaction">
    <interactant intactId="EBI-1172248">
        <id>Q9Y709</id>
    </interactant>
    <interactant intactId="EBI-1185526">
        <id>O74854</id>
        <label>pof6</label>
    </interactant>
    <organismsDiffer>false</organismsDiffer>
    <experiments>4</experiments>
</comment>
<comment type="interaction">
    <interactant intactId="EBI-1172248">
        <id>Q9Y709</id>
    </interactant>
    <interactant intactId="EBI-1185549">
        <id>O74531</id>
        <label>pof7</label>
    </interactant>
    <organismsDiffer>false</organismsDiffer>
    <experiments>2</experiments>
</comment>
<comment type="interaction">
    <interactant intactId="EBI-1172248">
        <id>Q9Y709</id>
    </interactant>
    <interactant intactId="EBI-1185389">
        <id>P87060</id>
        <label>pop1</label>
    </interactant>
    <organismsDiffer>false</organismsDiffer>
    <experiments>2</experiments>
</comment>
<comment type="interaction">
    <interactant intactId="EBI-1172248">
        <id>Q9Y709</id>
    </interactant>
    <interactant intactId="EBI-1185414">
        <id>O14170</id>
        <label>pop2</label>
    </interactant>
    <organismsDiffer>false</organismsDiffer>
    <experiments>3</experiments>
</comment>
<comment type="subcellular location">
    <subcellularLocation>
        <location evidence="4 9">Cytoplasm</location>
    </subcellularLocation>
    <subcellularLocation>
        <location evidence="4 9">Nucleus</location>
    </subcellularLocation>
</comment>
<comment type="similarity">
    <text evidence="2">Belongs to the SKP1 family.</text>
</comment>
<reference evidence="15" key="1">
    <citation type="journal article" date="1999" name="Genes Dev.">
        <title>Proper metaphase spindle length is determined by centromere proteins Mis12 and Mis6 required for faithful chromosome segregation.</title>
        <authorList>
            <person name="Goshima G."/>
            <person name="Saitoh S."/>
            <person name="Yanagida M."/>
        </authorList>
    </citation>
    <scope>NUCLEOTIDE SEQUENCE [GENOMIC DNA]</scope>
    <source>
        <strain>972 / ATCC 24843</strain>
    </source>
</reference>
<reference evidence="13 16" key="2">
    <citation type="journal article" date="2000" name="Mol. Cell">
        <title>The spike of S phase cyclin Cig2 expression at the G1-S border in fission yeast requires both APC and SCF ubiquitin ligases.</title>
        <authorList>
            <person name="Yamano H."/>
            <person name="Kitamura K."/>
            <person name="Kominami K."/>
            <person name="Lehmann A."/>
            <person name="Hunt T."/>
            <person name="Toda T."/>
        </authorList>
    </citation>
    <scope>NUCLEOTIDE SEQUENCE [GENOMIC DNA]</scope>
    <scope>FUNCTION</scope>
</reference>
<reference evidence="13 14" key="3">
    <citation type="journal article" date="2003" name="J. Biol. Chem.">
        <title>Skp1 and the F-box protein Pof6 are essential for cell separation in fission yeast.</title>
        <authorList>
            <person name="Hermand D."/>
            <person name="Bamps S."/>
            <person name="Tafforeau L."/>
            <person name="Vandenhaute J."/>
            <person name="Makela T.P."/>
        </authorList>
    </citation>
    <scope>NUCLEOTIDE SEQUENCE [GENOMIC DNA]</scope>
    <scope>FUNCTION</scope>
    <scope>INTERACTION WITH POF6</scope>
    <scope>MUTAGENESIS OF ILE-139</scope>
</reference>
<reference evidence="17" key="4">
    <citation type="journal article" date="2002" name="Nature">
        <title>The genome sequence of Schizosaccharomyces pombe.</title>
        <authorList>
            <person name="Wood V."/>
            <person name="Gwilliam R."/>
            <person name="Rajandream M.A."/>
            <person name="Lyne M.H."/>
            <person name="Lyne R."/>
            <person name="Stewart A."/>
            <person name="Sgouros J.G."/>
            <person name="Peat N."/>
            <person name="Hayles J."/>
            <person name="Baker S.G."/>
            <person name="Basham D."/>
            <person name="Bowman S."/>
            <person name="Brooks K."/>
            <person name="Brown D."/>
            <person name="Brown S."/>
            <person name="Chillingworth T."/>
            <person name="Churcher C.M."/>
            <person name="Collins M."/>
            <person name="Connor R."/>
            <person name="Cronin A."/>
            <person name="Davis P."/>
            <person name="Feltwell T."/>
            <person name="Fraser A."/>
            <person name="Gentles S."/>
            <person name="Goble A."/>
            <person name="Hamlin N."/>
            <person name="Harris D.E."/>
            <person name="Hidalgo J."/>
            <person name="Hodgson G."/>
            <person name="Holroyd S."/>
            <person name="Hornsby T."/>
            <person name="Howarth S."/>
            <person name="Huckle E.J."/>
            <person name="Hunt S."/>
            <person name="Jagels K."/>
            <person name="James K.D."/>
            <person name="Jones L."/>
            <person name="Jones M."/>
            <person name="Leather S."/>
            <person name="McDonald S."/>
            <person name="McLean J."/>
            <person name="Mooney P."/>
            <person name="Moule S."/>
            <person name="Mungall K.L."/>
            <person name="Murphy L.D."/>
            <person name="Niblett D."/>
            <person name="Odell C."/>
            <person name="Oliver K."/>
            <person name="O'Neil S."/>
            <person name="Pearson D."/>
            <person name="Quail M.A."/>
            <person name="Rabbinowitsch E."/>
            <person name="Rutherford K.M."/>
            <person name="Rutter S."/>
            <person name="Saunders D."/>
            <person name="Seeger K."/>
            <person name="Sharp S."/>
            <person name="Skelton J."/>
            <person name="Simmonds M.N."/>
            <person name="Squares R."/>
            <person name="Squares S."/>
            <person name="Stevens K."/>
            <person name="Taylor K."/>
            <person name="Taylor R.G."/>
            <person name="Tivey A."/>
            <person name="Walsh S.V."/>
            <person name="Warren T."/>
            <person name="Whitehead S."/>
            <person name="Woodward J.R."/>
            <person name="Volckaert G."/>
            <person name="Aert R."/>
            <person name="Robben J."/>
            <person name="Grymonprez B."/>
            <person name="Weltjens I."/>
            <person name="Vanstreels E."/>
            <person name="Rieger M."/>
            <person name="Schaefer M."/>
            <person name="Mueller-Auer S."/>
            <person name="Gabel C."/>
            <person name="Fuchs M."/>
            <person name="Duesterhoeft A."/>
            <person name="Fritzc C."/>
            <person name="Holzer E."/>
            <person name="Moestl D."/>
            <person name="Hilbert H."/>
            <person name="Borzym K."/>
            <person name="Langer I."/>
            <person name="Beck A."/>
            <person name="Lehrach H."/>
            <person name="Reinhardt R."/>
            <person name="Pohl T.M."/>
            <person name="Eger P."/>
            <person name="Zimmermann W."/>
            <person name="Wedler H."/>
            <person name="Wambutt R."/>
            <person name="Purnelle B."/>
            <person name="Goffeau A."/>
            <person name="Cadieu E."/>
            <person name="Dreano S."/>
            <person name="Gloux S."/>
            <person name="Lelaure V."/>
            <person name="Mottier S."/>
            <person name="Galibert F."/>
            <person name="Aves S.J."/>
            <person name="Xiang Z."/>
            <person name="Hunt C."/>
            <person name="Moore K."/>
            <person name="Hurst S.M."/>
            <person name="Lucas M."/>
            <person name="Rochet M."/>
            <person name="Gaillardin C."/>
            <person name="Tallada V.A."/>
            <person name="Garzon A."/>
            <person name="Thode G."/>
            <person name="Daga R.R."/>
            <person name="Cruzado L."/>
            <person name="Jimenez J."/>
            <person name="Sanchez M."/>
            <person name="del Rey F."/>
            <person name="Benito J."/>
            <person name="Dominguez A."/>
            <person name="Revuelta J.L."/>
            <person name="Moreno S."/>
            <person name="Armstrong J."/>
            <person name="Forsburg S.L."/>
            <person name="Cerutti L."/>
            <person name="Lowe T."/>
            <person name="McCombie W.R."/>
            <person name="Paulsen I."/>
            <person name="Potashkin J."/>
            <person name="Shpakovski G.V."/>
            <person name="Ussery D."/>
            <person name="Barrell B.G."/>
            <person name="Nurse P."/>
        </authorList>
    </citation>
    <scope>NUCLEOTIDE SEQUENCE [LARGE SCALE GENOMIC DNA]</scope>
    <source>
        <strain>972 / ATCC 24843</strain>
    </source>
</reference>
<reference evidence="13" key="5">
    <citation type="journal article" date="2002" name="BMC Biochem.">
        <title>Combinatorial diversity of fission yeast SCF ubiquitin ligases by homo- and heterooligomeric assemblies of the F-box proteins Pop1p and Pop2p.</title>
        <authorList>
            <person name="Seibert V."/>
            <person name="Prohl C."/>
            <person name="Schoultz I."/>
            <person name="Rhee E."/>
            <person name="Lopez R."/>
            <person name="Abderazzaq K."/>
            <person name="Zhou C."/>
            <person name="Wolf D.A."/>
        </authorList>
    </citation>
    <scope>FUNCTION</scope>
    <scope>SUBCELLULAR LOCATION</scope>
    <scope>INTERACTION WITH PCU1; PIP1; POP1 AND POP2</scope>
</reference>
<reference evidence="13" key="6">
    <citation type="journal article" date="2004" name="Biochem. Biophys. Res. Commun.">
        <title>Mcs2 and a novel CAK subunit Pmh1 associate with Skp1 in fission yeast.</title>
        <authorList>
            <person name="Bamps S."/>
            <person name="Westerling T."/>
            <person name="Pihlak A."/>
            <person name="Tafforeau L."/>
            <person name="Vandenhaute J."/>
            <person name="Maekelae T.P."/>
            <person name="Hermand D."/>
        </authorList>
    </citation>
    <scope>INTERACTION WITH MCS2 AND TFB3</scope>
    <scope>MUTAGENESIS OF ILE-139</scope>
</reference>
<reference evidence="13" key="7">
    <citation type="journal article" date="2004" name="FEBS Lett.">
        <title>Fission yeast Skp1 is required for spindle morphology and nuclear membrane segregation at anaphase.</title>
        <authorList>
            <person name="Lehmann A."/>
            <person name="Toda T."/>
        </authorList>
    </citation>
    <scope>FUNCTION</scope>
</reference>
<reference evidence="13" key="8">
    <citation type="journal article" date="2004" name="Genes Cells">
        <title>Molecular interactions of fission yeast Skp1 and its role in the DNA damage checkpoint.</title>
        <authorList>
            <person name="Lehmann A."/>
            <person name="Katayama S."/>
            <person name="Harrison C."/>
            <person name="Dhut S."/>
            <person name="Kitamura K."/>
            <person name="McDonald N."/>
            <person name="Toda T."/>
        </authorList>
    </citation>
    <scope>FUNCTION</scope>
    <scope>INTERACTION WITH CUL1; FBH1; POF1; POF2; POF3; POF4; POF5; POF6; POF7; POF8; POF9; POF10; POF11; POF12; POF13; POP1 AND POP2</scope>
    <scope>MUTAGENESIS OF VAL-102; ILE-110 AND LEU-113</scope>
</reference>
<reference evidence="13" key="9">
    <citation type="journal article" date="2006" name="EMBO J.">
        <title>Repression of ergosterol level during oxidative stress by fission yeast F-box protein Pof14 independently of SCF.</title>
        <authorList>
            <person name="Tafforeau L."/>
            <person name="Le Blastier S."/>
            <person name="Bamps S."/>
            <person name="Dewez M."/>
            <person name="Vandenhaute J."/>
            <person name="Hermand D."/>
        </authorList>
    </citation>
    <scope>INTERACTION WITH POF14</scope>
</reference>
<reference evidence="13" key="10">
    <citation type="journal article" date="2006" name="Nat. Biotechnol.">
        <title>ORFeome cloning and global analysis of protein localization in the fission yeast Schizosaccharomyces pombe.</title>
        <authorList>
            <person name="Matsuyama A."/>
            <person name="Arai R."/>
            <person name="Yashiroda Y."/>
            <person name="Shirai A."/>
            <person name="Kamata A."/>
            <person name="Sekido S."/>
            <person name="Kobayashi Y."/>
            <person name="Hashimoto A."/>
            <person name="Hamamoto M."/>
            <person name="Hiraoka Y."/>
            <person name="Horinouchi S."/>
            <person name="Yoshida M."/>
        </authorList>
    </citation>
    <scope>SUBCELLULAR LOCATION [LARGE SCALE ANALYSIS]</scope>
</reference>
<reference key="11">
    <citation type="journal article" date="2008" name="Eukaryot. Cell">
        <title>Loss of regulators of vacuolar ATPase function and ceramide synthesis results in multidrug sensitivity in Schizosaccharomyces pombe.</title>
        <authorList>
            <person name="Dawson K."/>
            <person name="Toone W.M."/>
            <person name="Jones N."/>
            <person name="Wilkinson C.R."/>
        </authorList>
    </citation>
    <scope>IDENTIFICATION IN THE RAVE COMPLEX</scope>
</reference>
<reference key="12">
    <citation type="journal article" date="2009" name="Biochem. J.">
        <title>Identification of a conserved F-box protein 6 interactor essential for endocytosis and cytokinesis in fission yeast.</title>
        <authorList>
            <person name="Jourdain I."/>
            <person name="Spielewoy N."/>
            <person name="Thompson J."/>
            <person name="Dhut S."/>
            <person name="Yates J.R."/>
            <person name="Toda T."/>
        </authorList>
    </citation>
    <scope>INTERACTION WITH SIP1 AND SKP1</scope>
</reference>
<organism>
    <name type="scientific">Schizosaccharomyces pombe (strain 972 / ATCC 24843)</name>
    <name type="common">Fission yeast</name>
    <dbReference type="NCBI Taxonomy" id="284812"/>
    <lineage>
        <taxon>Eukaryota</taxon>
        <taxon>Fungi</taxon>
        <taxon>Dikarya</taxon>
        <taxon>Ascomycota</taxon>
        <taxon>Taphrinomycotina</taxon>
        <taxon>Schizosaccharomycetes</taxon>
        <taxon>Schizosaccharomycetales</taxon>
        <taxon>Schizosaccharomycetaceae</taxon>
        <taxon>Schizosaccharomyces</taxon>
    </lineage>
</organism>
<feature type="chain" id="PRO_0000271429" description="Suppressor of kinetochore protein 1">
    <location>
        <begin position="1"/>
        <end position="161"/>
    </location>
</feature>
<feature type="region of interest" description="Interaction with the F-box domain of F-box proteins" evidence="1">
    <location>
        <begin position="102"/>
        <end position="161"/>
    </location>
</feature>
<feature type="mutagenesis site" description="Causes G2 delay." evidence="6">
    <original>V</original>
    <variation>A</variation>
    <location>
        <position position="102"/>
    </location>
</feature>
<feature type="mutagenesis site" description="Prevents binding to pof1, pof3 and pof10. Causes G2 delay." evidence="6">
    <original>I</original>
    <variation>T</variation>
    <location>
        <position position="110"/>
    </location>
</feature>
<feature type="mutagenesis site" description="Causes G2 delay." evidence="6">
    <original>L</original>
    <variation>F</variation>
    <location>
        <position position="113"/>
    </location>
</feature>
<feature type="mutagenesis site" description="Causes early cell cycle arrest. Prevents binding to mcs2." evidence="5 8">
    <original>I</original>
    <variation>N</variation>
    <location>
        <position position="139"/>
    </location>
</feature>
<proteinExistence type="evidence at protein level"/>